<protein>
    <recommendedName>
        <fullName evidence="1">Photosystem I assembly protein Ycf4</fullName>
    </recommendedName>
</protein>
<comment type="function">
    <text evidence="1">Seems to be required for the assembly of the photosystem I complex.</text>
</comment>
<comment type="subcellular location">
    <subcellularLocation>
        <location evidence="2">Plastid thylakoid membrane</location>
        <topology evidence="1">Multi-pass membrane protein</topology>
    </subcellularLocation>
</comment>
<comment type="similarity">
    <text evidence="1">Belongs to the Ycf4 family.</text>
</comment>
<comment type="caution">
    <text evidence="2">Young tissue from this organism is photosynthetic and contains some thylakoids, although the photosynthetic activity does not exceed the light compensation point.</text>
</comment>
<organism>
    <name type="scientific">Cuscuta reflexa</name>
    <name type="common">Southern Asian dodder</name>
    <dbReference type="NCBI Taxonomy" id="4129"/>
    <lineage>
        <taxon>Eukaryota</taxon>
        <taxon>Viridiplantae</taxon>
        <taxon>Streptophyta</taxon>
        <taxon>Embryophyta</taxon>
        <taxon>Tracheophyta</taxon>
        <taxon>Spermatophyta</taxon>
        <taxon>Magnoliopsida</taxon>
        <taxon>eudicotyledons</taxon>
        <taxon>Gunneridae</taxon>
        <taxon>Pentapetalae</taxon>
        <taxon>asterids</taxon>
        <taxon>lamiids</taxon>
        <taxon>Solanales</taxon>
        <taxon>Convolvulaceae</taxon>
        <taxon>Cuscuteae</taxon>
        <taxon>Cuscuta</taxon>
        <taxon>Cuscuta subgen. Monogynella</taxon>
    </lineage>
</organism>
<geneLocation type="plastid"/>
<sequence>MSWRSEHIWIDLITGSRKISNLCWAFTLFLGSLGFVLVGTYSYLGRNLISFFPLQQIIFFPQGIVMSFYGIAGLFISSYLWCTISWNVGSGYDLFNRKEGIVCIFRWGFPGINRRIFLRFLLKDIRSVRIEVEEGIYAGRVLYMDIRGHRAIPLTRTDENLTPGELEKKAAELAYFLRVPIEVF</sequence>
<keyword id="KW-0472">Membrane</keyword>
<keyword id="KW-0602">Photosynthesis</keyword>
<keyword id="KW-0934">Plastid</keyword>
<keyword id="KW-0793">Thylakoid</keyword>
<keyword id="KW-0812">Transmembrane</keyword>
<keyword id="KW-1133">Transmembrane helix</keyword>
<reference key="1">
    <citation type="journal article" date="2007" name="BMC Plant Biol.">
        <title>Complete DNA sequences of the plastid genomes of two parasitic flowering plant species, Cuscuta reflexa and Cuscuta gronovii.</title>
        <authorList>
            <person name="Funk H.T."/>
            <person name="Berg S."/>
            <person name="Krupinska K."/>
            <person name="Maier U.-G."/>
            <person name="Krause K."/>
        </authorList>
    </citation>
    <scope>NUCLEOTIDE SEQUENCE [LARGE SCALE GENOMIC DNA]</scope>
</reference>
<name>YCF4_CUSRE</name>
<proteinExistence type="inferred from homology"/>
<evidence type="ECO:0000255" key="1">
    <source>
        <dbReference type="HAMAP-Rule" id="MF_00437"/>
    </source>
</evidence>
<evidence type="ECO:0000305" key="2"/>
<gene>
    <name evidence="1" type="primary">ycf4</name>
</gene>
<feature type="chain" id="PRO_0000326006" description="Photosystem I assembly protein Ycf4">
    <location>
        <begin position="1"/>
        <end position="184"/>
    </location>
</feature>
<feature type="transmembrane region" description="Helical" evidence="1">
    <location>
        <begin position="19"/>
        <end position="39"/>
    </location>
</feature>
<feature type="transmembrane region" description="Helical" evidence="1">
    <location>
        <begin position="57"/>
        <end position="77"/>
    </location>
</feature>
<dbReference type="EMBL" id="AM711640">
    <property type="protein sequence ID" value="CAM98403.1"/>
    <property type="molecule type" value="Genomic_DNA"/>
</dbReference>
<dbReference type="RefSeq" id="YP_001430117.1">
    <property type="nucleotide sequence ID" value="NC_009766.1"/>
</dbReference>
<dbReference type="GeneID" id="5536647"/>
<dbReference type="GO" id="GO:0009522">
    <property type="term" value="C:photosystem I"/>
    <property type="evidence" value="ECO:0007669"/>
    <property type="project" value="InterPro"/>
</dbReference>
<dbReference type="GO" id="GO:0055035">
    <property type="term" value="C:plastid thylakoid membrane"/>
    <property type="evidence" value="ECO:0007669"/>
    <property type="project" value="UniProtKB-SubCell"/>
</dbReference>
<dbReference type="GO" id="GO:0015979">
    <property type="term" value="P:photosynthesis"/>
    <property type="evidence" value="ECO:0007669"/>
    <property type="project" value="UniProtKB-UniRule"/>
</dbReference>
<dbReference type="HAMAP" id="MF_00437">
    <property type="entry name" value="Ycf4"/>
    <property type="match status" value="1"/>
</dbReference>
<dbReference type="InterPro" id="IPR003359">
    <property type="entry name" value="PSI_Ycf4_assembly"/>
</dbReference>
<dbReference type="PANTHER" id="PTHR33288">
    <property type="match status" value="1"/>
</dbReference>
<dbReference type="PANTHER" id="PTHR33288:SF4">
    <property type="entry name" value="PHOTOSYSTEM I ASSEMBLY PROTEIN YCF4"/>
    <property type="match status" value="1"/>
</dbReference>
<dbReference type="Pfam" id="PF02392">
    <property type="entry name" value="Ycf4"/>
    <property type="match status" value="1"/>
</dbReference>
<accession>A7M975</accession>